<sequence length="116" mass="13950">MTHYCGINRMKEGTDFEKKHTPFIECKDRVKANDYFEVKISTGIPHPMEDNHFIHWIELYMGDLYLARVDFTQFMKPEVKLMVKAPSKEHEKFILRALMRCNLHGVWEYEKEILLE</sequence>
<feature type="chain" id="PRO_0000140871" description="Putative superoxide reductase">
    <location>
        <begin position="1"/>
        <end position="116"/>
    </location>
</feature>
<feature type="binding site" evidence="1">
    <location>
        <position position="20"/>
    </location>
    <ligand>
        <name>Fe cation</name>
        <dbReference type="ChEBI" id="CHEBI:24875"/>
    </ligand>
</feature>
<feature type="binding site" evidence="1">
    <location>
        <position position="46"/>
    </location>
    <ligand>
        <name>Fe cation</name>
        <dbReference type="ChEBI" id="CHEBI:24875"/>
    </ligand>
</feature>
<feature type="binding site" evidence="1">
    <location>
        <position position="52"/>
    </location>
    <ligand>
        <name>Fe cation</name>
        <dbReference type="ChEBI" id="CHEBI:24875"/>
    </ligand>
</feature>
<feature type="binding site" evidence="1">
    <location>
        <position position="101"/>
    </location>
    <ligand>
        <name>Fe cation</name>
        <dbReference type="ChEBI" id="CHEBI:24875"/>
    </ligand>
</feature>
<feature type="binding site" evidence="1">
    <location>
        <position position="104"/>
    </location>
    <ligand>
        <name>Fe cation</name>
        <dbReference type="ChEBI" id="CHEBI:24875"/>
    </ligand>
</feature>
<protein>
    <recommendedName>
        <fullName>Putative superoxide reductase</fullName>
        <shortName>SOR</shortName>
        <ecNumber>1.15.1.2</ecNumber>
    </recommendedName>
</protein>
<organism>
    <name type="scientific">Methanocaldococcus jannaschii (strain ATCC 43067 / DSM 2661 / JAL-1 / JCM 10045 / NBRC 100440)</name>
    <name type="common">Methanococcus jannaschii</name>
    <dbReference type="NCBI Taxonomy" id="243232"/>
    <lineage>
        <taxon>Archaea</taxon>
        <taxon>Methanobacteriati</taxon>
        <taxon>Methanobacteriota</taxon>
        <taxon>Methanomada group</taxon>
        <taxon>Methanococci</taxon>
        <taxon>Methanococcales</taxon>
        <taxon>Methanocaldococcaceae</taxon>
        <taxon>Methanocaldococcus</taxon>
    </lineage>
</organism>
<keyword id="KW-0249">Electron transport</keyword>
<keyword id="KW-0408">Iron</keyword>
<keyword id="KW-0479">Metal-binding</keyword>
<keyword id="KW-0560">Oxidoreductase</keyword>
<keyword id="KW-1185">Reference proteome</keyword>
<keyword id="KW-0813">Transport</keyword>
<comment type="function">
    <text evidence="1">Uses electrons from reduced NADP, by way of rubredoxin and an oxidoreductase, to catalyze the reduction of superoxide to hydrogen peroxide.</text>
</comment>
<comment type="catalytic activity">
    <reaction evidence="2">
        <text>reduced [rubredoxin] + superoxide + 2 H(+) = oxidized [rubredoxin] + H2O2</text>
        <dbReference type="Rhea" id="RHEA:21324"/>
        <dbReference type="Rhea" id="RHEA-COMP:10302"/>
        <dbReference type="Rhea" id="RHEA-COMP:10303"/>
        <dbReference type="ChEBI" id="CHEBI:15378"/>
        <dbReference type="ChEBI" id="CHEBI:16240"/>
        <dbReference type="ChEBI" id="CHEBI:18421"/>
        <dbReference type="ChEBI" id="CHEBI:29033"/>
        <dbReference type="ChEBI" id="CHEBI:29034"/>
        <dbReference type="EC" id="1.15.1.2"/>
    </reaction>
</comment>
<comment type="cofactor">
    <cofactor evidence="1">
        <name>Fe cation</name>
        <dbReference type="ChEBI" id="CHEBI:24875"/>
    </cofactor>
</comment>
<comment type="similarity">
    <text evidence="3">Belongs to the desulfoferrodoxin family.</text>
</comment>
<accession>Q58151</accession>
<proteinExistence type="inferred from homology"/>
<reference key="1">
    <citation type="journal article" date="1996" name="Science">
        <title>Complete genome sequence of the methanogenic archaeon, Methanococcus jannaschii.</title>
        <authorList>
            <person name="Bult C.J."/>
            <person name="White O."/>
            <person name="Olsen G.J."/>
            <person name="Zhou L."/>
            <person name="Fleischmann R.D."/>
            <person name="Sutton G.G."/>
            <person name="Blake J.A."/>
            <person name="FitzGerald L.M."/>
            <person name="Clayton R.A."/>
            <person name="Gocayne J.D."/>
            <person name="Kerlavage A.R."/>
            <person name="Dougherty B.A."/>
            <person name="Tomb J.-F."/>
            <person name="Adams M.D."/>
            <person name="Reich C.I."/>
            <person name="Overbeek R."/>
            <person name="Kirkness E.F."/>
            <person name="Weinstock K.G."/>
            <person name="Merrick J.M."/>
            <person name="Glodek A."/>
            <person name="Scott J.L."/>
            <person name="Geoghagen N.S.M."/>
            <person name="Weidman J.F."/>
            <person name="Fuhrmann J.L."/>
            <person name="Nguyen D."/>
            <person name="Utterback T.R."/>
            <person name="Kelley J.M."/>
            <person name="Peterson J.D."/>
            <person name="Sadow P.W."/>
            <person name="Hanna M.C."/>
            <person name="Cotton M.D."/>
            <person name="Roberts K.M."/>
            <person name="Hurst M.A."/>
            <person name="Kaine B.P."/>
            <person name="Borodovsky M."/>
            <person name="Klenk H.-P."/>
            <person name="Fraser C.M."/>
            <person name="Smith H.O."/>
            <person name="Woese C.R."/>
            <person name="Venter J.C."/>
        </authorList>
    </citation>
    <scope>NUCLEOTIDE SEQUENCE [LARGE SCALE GENOMIC DNA]</scope>
    <source>
        <strain>ATCC 43067 / DSM 2661 / JAL-1 / JCM 10045 / NBRC 100440</strain>
    </source>
</reference>
<gene>
    <name type="ordered locus">MJ0741</name>
</gene>
<name>SOR_METJA</name>
<dbReference type="EC" id="1.15.1.2"/>
<dbReference type="EMBL" id="L77117">
    <property type="protein sequence ID" value="AAB98735.1"/>
    <property type="molecule type" value="Genomic_DNA"/>
</dbReference>
<dbReference type="PIR" id="E64392">
    <property type="entry name" value="E64392"/>
</dbReference>
<dbReference type="RefSeq" id="WP_010870246.1">
    <property type="nucleotide sequence ID" value="NC_000909.1"/>
</dbReference>
<dbReference type="SMR" id="Q58151"/>
<dbReference type="STRING" id="243232.MJ_0741"/>
<dbReference type="PaxDb" id="243232-MJ_0741"/>
<dbReference type="EnsemblBacteria" id="AAB98735">
    <property type="protein sequence ID" value="AAB98735"/>
    <property type="gene ID" value="MJ_0741"/>
</dbReference>
<dbReference type="GeneID" id="1451618"/>
<dbReference type="KEGG" id="mja:MJ_0741"/>
<dbReference type="eggNOG" id="arCOG02146">
    <property type="taxonomic scope" value="Archaea"/>
</dbReference>
<dbReference type="HOGENOM" id="CLU_118960_2_1_2"/>
<dbReference type="InParanoid" id="Q58151"/>
<dbReference type="OrthoDB" id="30725at2157"/>
<dbReference type="PhylomeDB" id="Q58151"/>
<dbReference type="Proteomes" id="UP000000805">
    <property type="component" value="Chromosome"/>
</dbReference>
<dbReference type="GO" id="GO:0005506">
    <property type="term" value="F:iron ion binding"/>
    <property type="evidence" value="ECO:0007669"/>
    <property type="project" value="InterPro"/>
</dbReference>
<dbReference type="GO" id="GO:0050605">
    <property type="term" value="F:superoxide reductase activity"/>
    <property type="evidence" value="ECO:0007669"/>
    <property type="project" value="UniProtKB-EC"/>
</dbReference>
<dbReference type="CDD" id="cd03172">
    <property type="entry name" value="SORL_classII"/>
    <property type="match status" value="1"/>
</dbReference>
<dbReference type="Gene3D" id="2.60.40.730">
    <property type="entry name" value="SOR catalytic domain"/>
    <property type="match status" value="1"/>
</dbReference>
<dbReference type="InterPro" id="IPR002742">
    <property type="entry name" value="Desulfoferrodoxin_Fe-bd_dom"/>
</dbReference>
<dbReference type="InterPro" id="IPR036073">
    <property type="entry name" value="Desulfoferrodoxin_Fe-bd_dom_sf"/>
</dbReference>
<dbReference type="InterPro" id="IPR051233">
    <property type="entry name" value="Desulfoferrodoxin_SOR"/>
</dbReference>
<dbReference type="NCBIfam" id="TIGR00332">
    <property type="entry name" value="neela_ferrous"/>
    <property type="match status" value="1"/>
</dbReference>
<dbReference type="PANTHER" id="PTHR36541">
    <property type="entry name" value="SUPEROXIDE REDUCTASE-RELATED"/>
    <property type="match status" value="1"/>
</dbReference>
<dbReference type="PANTHER" id="PTHR36541:SF1">
    <property type="entry name" value="SUPEROXIDE REDUCTASE-RELATED"/>
    <property type="match status" value="1"/>
</dbReference>
<dbReference type="Pfam" id="PF01880">
    <property type="entry name" value="Desulfoferrodox"/>
    <property type="match status" value="1"/>
</dbReference>
<dbReference type="SUPFAM" id="SSF49367">
    <property type="entry name" value="Superoxide reductase-like"/>
    <property type="match status" value="1"/>
</dbReference>
<evidence type="ECO:0000250" key="1"/>
<evidence type="ECO:0000250" key="2">
    <source>
        <dbReference type="UniProtKB" id="P82385"/>
    </source>
</evidence>
<evidence type="ECO:0000305" key="3"/>